<evidence type="ECO:0000255" key="1">
    <source>
        <dbReference type="HAMAP-Rule" id="MF_00163"/>
    </source>
</evidence>
<reference key="1">
    <citation type="journal article" date="2003" name="Nucleic Acids Res.">
        <title>Genome sequence of Chlamydophila caviae (Chlamydia psittaci GPIC): examining the role of niche-specific genes in the evolution of the Chlamydiaceae.</title>
        <authorList>
            <person name="Read T.D."/>
            <person name="Myers G.S.A."/>
            <person name="Brunham R.C."/>
            <person name="Nelson W.C."/>
            <person name="Paulsen I.T."/>
            <person name="Heidelberg J.F."/>
            <person name="Holtzapple E.K."/>
            <person name="Khouri H.M."/>
            <person name="Federova N.B."/>
            <person name="Carty H.A."/>
            <person name="Umayam L.A."/>
            <person name="Haft D.H."/>
            <person name="Peterson J.D."/>
            <person name="Beanan M.J."/>
            <person name="White O."/>
            <person name="Salzberg S.L."/>
            <person name="Hsia R.-C."/>
            <person name="McClarty G."/>
            <person name="Rank R.G."/>
            <person name="Bavoil P.M."/>
            <person name="Fraser C.M."/>
        </authorList>
    </citation>
    <scope>NUCLEOTIDE SEQUENCE [LARGE SCALE GENOMIC DNA]</scope>
    <source>
        <strain>ATCC VR-813 / DSM 19441 / 03DC25 / GPIC</strain>
    </source>
</reference>
<keyword id="KW-0378">Hydrolase</keyword>
<keyword id="KW-0408">Iron</keyword>
<keyword id="KW-0479">Metal-binding</keyword>
<keyword id="KW-0648">Protein biosynthesis</keyword>
<feature type="chain" id="PRO_0000082760" description="Peptide deformylase">
    <location>
        <begin position="1"/>
        <end position="186"/>
    </location>
</feature>
<feature type="active site" evidence="1">
    <location>
        <position position="142"/>
    </location>
</feature>
<feature type="binding site" evidence="1">
    <location>
        <position position="99"/>
    </location>
    <ligand>
        <name>Fe cation</name>
        <dbReference type="ChEBI" id="CHEBI:24875"/>
    </ligand>
</feature>
<feature type="binding site" evidence="1">
    <location>
        <position position="141"/>
    </location>
    <ligand>
        <name>Fe cation</name>
        <dbReference type="ChEBI" id="CHEBI:24875"/>
    </ligand>
</feature>
<feature type="binding site" evidence="1">
    <location>
        <position position="145"/>
    </location>
    <ligand>
        <name>Fe cation</name>
        <dbReference type="ChEBI" id="CHEBI:24875"/>
    </ligand>
</feature>
<organism>
    <name type="scientific">Chlamydia caviae (strain ATCC VR-813 / DSM 19441 / 03DC25 / GPIC)</name>
    <name type="common">Chlamydophila caviae</name>
    <dbReference type="NCBI Taxonomy" id="227941"/>
    <lineage>
        <taxon>Bacteria</taxon>
        <taxon>Pseudomonadati</taxon>
        <taxon>Chlamydiota</taxon>
        <taxon>Chlamydiia</taxon>
        <taxon>Chlamydiales</taxon>
        <taxon>Chlamydiaceae</taxon>
        <taxon>Chlamydia/Chlamydophila group</taxon>
        <taxon>Chlamydia</taxon>
    </lineage>
</organism>
<name>DEF_CHLCV</name>
<protein>
    <recommendedName>
        <fullName evidence="1">Peptide deformylase</fullName>
        <shortName evidence="1">PDF</shortName>
        <ecNumber evidence="1">3.5.1.88</ecNumber>
    </recommendedName>
    <alternativeName>
        <fullName evidence="1">Polypeptide deformylase</fullName>
    </alternativeName>
</protein>
<gene>
    <name evidence="1" type="primary">def</name>
    <name type="ordered locus">CCA_00311</name>
</gene>
<accession>Q823U4</accession>
<sequence>MIRELEYYGSHILRRKADIIPEITDATRQLVQDMYETMVAHKGVGLAAPQVGESLSLFVMCVEGETEEGDLIFCDFPKVYINPVLSNPSEDLVIGREGCLSIPGLRADVYRPQSITVTAVNLDGQEFTEHLEGFPARIIMHENDHLHGVLYIDKMEEPKDIKKFKASLEKIRRRYHAHVKPEDRAS</sequence>
<comment type="function">
    <text evidence="1">Removes the formyl group from the N-terminal Met of newly synthesized proteins. Requires at least a dipeptide for an efficient rate of reaction. N-terminal L-methionine is a prerequisite for activity but the enzyme has broad specificity at other positions.</text>
</comment>
<comment type="catalytic activity">
    <reaction evidence="1">
        <text>N-terminal N-formyl-L-methionyl-[peptide] + H2O = N-terminal L-methionyl-[peptide] + formate</text>
        <dbReference type="Rhea" id="RHEA:24420"/>
        <dbReference type="Rhea" id="RHEA-COMP:10639"/>
        <dbReference type="Rhea" id="RHEA-COMP:10640"/>
        <dbReference type="ChEBI" id="CHEBI:15377"/>
        <dbReference type="ChEBI" id="CHEBI:15740"/>
        <dbReference type="ChEBI" id="CHEBI:49298"/>
        <dbReference type="ChEBI" id="CHEBI:64731"/>
        <dbReference type="EC" id="3.5.1.88"/>
    </reaction>
</comment>
<comment type="cofactor">
    <cofactor evidence="1">
        <name>Fe(2+)</name>
        <dbReference type="ChEBI" id="CHEBI:29033"/>
    </cofactor>
    <text evidence="1">Binds 1 Fe(2+) ion.</text>
</comment>
<comment type="similarity">
    <text evidence="1">Belongs to the polypeptide deformylase family.</text>
</comment>
<dbReference type="EC" id="3.5.1.88" evidence="1"/>
<dbReference type="EMBL" id="AE015925">
    <property type="protein sequence ID" value="AAP05060.1"/>
    <property type="molecule type" value="Genomic_DNA"/>
</dbReference>
<dbReference type="RefSeq" id="WP_011006278.1">
    <property type="nucleotide sequence ID" value="NC_003361.3"/>
</dbReference>
<dbReference type="SMR" id="Q823U4"/>
<dbReference type="STRING" id="227941.CCA_00311"/>
<dbReference type="KEGG" id="cca:CCA_00311"/>
<dbReference type="eggNOG" id="COG0242">
    <property type="taxonomic scope" value="Bacteria"/>
</dbReference>
<dbReference type="HOGENOM" id="CLU_061901_2_0_0"/>
<dbReference type="OrthoDB" id="9784988at2"/>
<dbReference type="Proteomes" id="UP000002193">
    <property type="component" value="Chromosome"/>
</dbReference>
<dbReference type="GO" id="GO:0046872">
    <property type="term" value="F:metal ion binding"/>
    <property type="evidence" value="ECO:0007669"/>
    <property type="project" value="UniProtKB-KW"/>
</dbReference>
<dbReference type="GO" id="GO:0042586">
    <property type="term" value="F:peptide deformylase activity"/>
    <property type="evidence" value="ECO:0007669"/>
    <property type="project" value="UniProtKB-UniRule"/>
</dbReference>
<dbReference type="GO" id="GO:0043686">
    <property type="term" value="P:co-translational protein modification"/>
    <property type="evidence" value="ECO:0007669"/>
    <property type="project" value="TreeGrafter"/>
</dbReference>
<dbReference type="GO" id="GO:0006412">
    <property type="term" value="P:translation"/>
    <property type="evidence" value="ECO:0007669"/>
    <property type="project" value="UniProtKB-UniRule"/>
</dbReference>
<dbReference type="CDD" id="cd00487">
    <property type="entry name" value="Pep_deformylase"/>
    <property type="match status" value="1"/>
</dbReference>
<dbReference type="Gene3D" id="3.90.45.10">
    <property type="entry name" value="Peptide deformylase"/>
    <property type="match status" value="1"/>
</dbReference>
<dbReference type="HAMAP" id="MF_00163">
    <property type="entry name" value="Pep_deformylase"/>
    <property type="match status" value="1"/>
</dbReference>
<dbReference type="InterPro" id="IPR023635">
    <property type="entry name" value="Peptide_deformylase"/>
</dbReference>
<dbReference type="InterPro" id="IPR036821">
    <property type="entry name" value="Peptide_deformylase_sf"/>
</dbReference>
<dbReference type="NCBIfam" id="TIGR00079">
    <property type="entry name" value="pept_deformyl"/>
    <property type="match status" value="1"/>
</dbReference>
<dbReference type="NCBIfam" id="NF001159">
    <property type="entry name" value="PRK00150.1-3"/>
    <property type="match status" value="1"/>
</dbReference>
<dbReference type="PANTHER" id="PTHR10458">
    <property type="entry name" value="PEPTIDE DEFORMYLASE"/>
    <property type="match status" value="1"/>
</dbReference>
<dbReference type="PANTHER" id="PTHR10458:SF22">
    <property type="entry name" value="PEPTIDE DEFORMYLASE"/>
    <property type="match status" value="1"/>
</dbReference>
<dbReference type="Pfam" id="PF01327">
    <property type="entry name" value="Pep_deformylase"/>
    <property type="match status" value="1"/>
</dbReference>
<dbReference type="PIRSF" id="PIRSF004749">
    <property type="entry name" value="Pep_def"/>
    <property type="match status" value="1"/>
</dbReference>
<dbReference type="PRINTS" id="PR01576">
    <property type="entry name" value="PDEFORMYLASE"/>
</dbReference>
<dbReference type="SUPFAM" id="SSF56420">
    <property type="entry name" value="Peptide deformylase"/>
    <property type="match status" value="1"/>
</dbReference>
<proteinExistence type="inferred from homology"/>